<name>VSN1_LENAE</name>
<reference key="1">
    <citation type="journal article" date="1995" name="Gene">
        <title>Cloning and expression of the NaeI restriction endonuclease-encoding gene and sequence analysis of the NaeI restriction-modification system.</title>
        <authorList>
            <person name="Taron C.H."/>
            <person name="van Cott E.M."/>
            <person name="Wilson G.G."/>
            <person name="Moran L.S."/>
            <person name="Slatko B.E."/>
            <person name="Hornstra L.J."/>
            <person name="Benner J.S."/>
            <person name="Kucera R.B."/>
            <person name="Guthrie E.P."/>
        </authorList>
    </citation>
    <scope>NUCLEOTIDE SEQUENCE [GENOMIC DNA]</scope>
    <source>
        <strain>ATCC 23870 / DSM 40034 / BCRC 13661 / CBS 609.68 / CIP 107109 / JCM 4614 / KCTC 9379 / NBRC 13195 / NCIMB 12944 / NRRL B-3298 / 701</strain>
    </source>
</reference>
<reference key="2">
    <citation type="journal article" date="2003" name="Nucleic Acids Res.">
        <title>A nomenclature for restriction enzymes, DNA methyltransferases, homing endonucleases and their genes.</title>
        <authorList>
            <person name="Roberts R.J."/>
            <person name="Belfort M."/>
            <person name="Bestor T."/>
            <person name="Bhagwat A.S."/>
            <person name="Bickle T.A."/>
            <person name="Bitinaite J."/>
            <person name="Blumenthal R.M."/>
            <person name="Degtyarev S.K."/>
            <person name="Dryden D.T."/>
            <person name="Dybvig K."/>
            <person name="Firman K."/>
            <person name="Gromova E.S."/>
            <person name="Gumport R.I."/>
            <person name="Halford S.E."/>
            <person name="Hattman S."/>
            <person name="Heitman J."/>
            <person name="Hornby D.P."/>
            <person name="Janulaitis A."/>
            <person name="Jeltsch A."/>
            <person name="Josephsen J."/>
            <person name="Kiss A."/>
            <person name="Klaenhammer T.R."/>
            <person name="Kobayashi I."/>
            <person name="Kong H."/>
            <person name="Krueger D.H."/>
            <person name="Lacks S."/>
            <person name="Marinus M.G."/>
            <person name="Miyahara M."/>
            <person name="Morgan R.D."/>
            <person name="Murray N.E."/>
            <person name="Nagaraja V."/>
            <person name="Piekarowicz A."/>
            <person name="Pingoud A."/>
            <person name="Raleigh E."/>
            <person name="Rao D.N."/>
            <person name="Reich N."/>
            <person name="Repin V.E."/>
            <person name="Selker E.U."/>
            <person name="Shaw P.C."/>
            <person name="Stein D.C."/>
            <person name="Stoddard B.L."/>
            <person name="Szybalski W."/>
            <person name="Trautner T.A."/>
            <person name="Van Etten J.L."/>
            <person name="Vitor J.M."/>
            <person name="Wilson G.G."/>
            <person name="Xu S.Y."/>
        </authorList>
    </citation>
    <scope>NOMENCLATURE</scope>
</reference>
<gene>
    <name type="primary">vsr</name>
    <name evidence="4" type="synonym">naeIV</name>
</gene>
<keyword id="KW-0227">DNA damage</keyword>
<keyword id="KW-0234">DNA repair</keyword>
<keyword id="KW-0255">Endonuclease</keyword>
<keyword id="KW-0378">Hydrolase</keyword>
<keyword id="KW-0540">Nuclease</keyword>
<keyword id="KW-0680">Restriction system</keyword>
<sequence>MSDKSSRAAARARAHASGTYPAPLNAGRSRNMQANRRSGTKPEAALRSALFKLGYRYRKDFLLRLGDGVKVKPDIVFTARKVAVFIDGCFWHVCPDHGRQPTTNEWYWSPKLRRNVERDRTVNQSLTNAGWRVLRVWEHEELQDAVAAVVDTLHHLEHGFDTSAED</sequence>
<organism>
    <name type="scientific">Lentzea aerocolonigenes</name>
    <name type="common">Lechevalieria aerocolonigenes</name>
    <name type="synonym">Saccharothrix aerocolonigenes</name>
    <dbReference type="NCBI Taxonomy" id="68170"/>
    <lineage>
        <taxon>Bacteria</taxon>
        <taxon>Bacillati</taxon>
        <taxon>Actinomycetota</taxon>
        <taxon>Actinomycetes</taxon>
        <taxon>Pseudonocardiales</taxon>
        <taxon>Pseudonocardiaceae</taxon>
        <taxon>Lentzea</taxon>
    </lineage>
</organism>
<protein>
    <recommendedName>
        <fullName evidence="3">Type II nicking enzyme V.NaeI</fullName>
        <shortName evidence="4">V.NaeI</shortName>
        <ecNumber>3.1.-.-</ecNumber>
    </recommendedName>
    <alternativeName>
        <fullName>NaeI very short patch repair endonuclease</fullName>
    </alternativeName>
</protein>
<comment type="function">
    <text evidence="1">May nick NaeI sequences that contain T/G mispairs resulting from m5C-deamination. If unrepaired, these mismatches can lead to C-to-T transition mutations. The very short patch (VSP) repair process counteracts the mutagenic process by repairing the mismatches in favor of the G-containing strand. This enzyme is an endonuclease that nicks double-stranded DNA within the sequence GCCGGC (C-methylation site unknown) next to the thymidine residue that is mismatched to 2'-deoxyguanosine. The incision is mismatch-dependent and strand-specific.</text>
</comment>
<comment type="similarity">
    <text evidence="5">Belongs to the Vsr family.</text>
</comment>
<feature type="chain" id="PRO_0000200292" description="Type II nicking enzyme V.NaeI">
    <location>
        <begin position="1"/>
        <end position="166"/>
    </location>
</feature>
<feature type="region of interest" description="Disordered" evidence="2">
    <location>
        <begin position="1"/>
        <end position="41"/>
    </location>
</feature>
<feature type="compositionally biased region" description="Low complexity" evidence="2">
    <location>
        <begin position="7"/>
        <end position="17"/>
    </location>
</feature>
<feature type="compositionally biased region" description="Polar residues" evidence="2">
    <location>
        <begin position="28"/>
        <end position="37"/>
    </location>
</feature>
<evidence type="ECO:0000250" key="1">
    <source>
        <dbReference type="UniProtKB" id="P09184"/>
    </source>
</evidence>
<evidence type="ECO:0000256" key="2">
    <source>
        <dbReference type="SAM" id="MobiDB-lite"/>
    </source>
</evidence>
<evidence type="ECO:0000303" key="3">
    <source>
    </source>
</evidence>
<evidence type="ECO:0000303" key="4">
    <source>
    </source>
</evidence>
<evidence type="ECO:0000305" key="5"/>
<accession>P50186</accession>
<proteinExistence type="inferred from homology"/>
<dbReference type="EC" id="3.1.-.-"/>
<dbReference type="EMBL" id="U09581">
    <property type="protein sequence ID" value="AAC43326.1"/>
    <property type="molecule type" value="Genomic_DNA"/>
</dbReference>
<dbReference type="RefSeq" id="WP_030468109.1">
    <property type="nucleotide sequence ID" value="NZ_BBOJ01000008.1"/>
</dbReference>
<dbReference type="SMR" id="P50186"/>
<dbReference type="STRING" id="68170.GCA_000974445_06523"/>
<dbReference type="REBASE" id="165909">
    <property type="entry name" value="V.Nse506ORF6588P"/>
</dbReference>
<dbReference type="REBASE" id="166485">
    <property type="entry name" value="V.Nse506ORF2622P"/>
</dbReference>
<dbReference type="REBASE" id="166489">
    <property type="entry name" value="V.Nse506ORF862P"/>
</dbReference>
<dbReference type="REBASE" id="3678">
    <property type="entry name" value="V.NaeIP"/>
</dbReference>
<dbReference type="OrthoDB" id="9801520at2"/>
<dbReference type="GO" id="GO:0004519">
    <property type="term" value="F:endonuclease activity"/>
    <property type="evidence" value="ECO:0007669"/>
    <property type="project" value="UniProtKB-KW"/>
</dbReference>
<dbReference type="GO" id="GO:0009307">
    <property type="term" value="P:DNA restriction-modification system"/>
    <property type="evidence" value="ECO:0007669"/>
    <property type="project" value="UniProtKB-KW"/>
</dbReference>
<dbReference type="GO" id="GO:0006298">
    <property type="term" value="P:mismatch repair"/>
    <property type="evidence" value="ECO:0007669"/>
    <property type="project" value="InterPro"/>
</dbReference>
<dbReference type="CDD" id="cd00221">
    <property type="entry name" value="Vsr"/>
    <property type="match status" value="1"/>
</dbReference>
<dbReference type="Gene3D" id="3.40.960.10">
    <property type="entry name" value="VSR Endonuclease"/>
    <property type="match status" value="1"/>
</dbReference>
<dbReference type="InterPro" id="IPR004603">
    <property type="entry name" value="DNA_mismatch_endonuc_vsr"/>
</dbReference>
<dbReference type="InterPro" id="IPR011335">
    <property type="entry name" value="Restrct_endonuc-II-like"/>
</dbReference>
<dbReference type="NCBIfam" id="TIGR00632">
    <property type="entry name" value="vsr"/>
    <property type="match status" value="1"/>
</dbReference>
<dbReference type="Pfam" id="PF03852">
    <property type="entry name" value="Vsr"/>
    <property type="match status" value="1"/>
</dbReference>
<dbReference type="PIRSF" id="PIRSF018267">
    <property type="entry name" value="VSR_endonuc"/>
    <property type="match status" value="1"/>
</dbReference>
<dbReference type="SUPFAM" id="SSF52980">
    <property type="entry name" value="Restriction endonuclease-like"/>
    <property type="match status" value="1"/>
</dbReference>